<reference key="1">
    <citation type="journal article" date="2004" name="Nat. Genet.">
        <title>Complete sequencing and characterization of 21,243 full-length human cDNAs.</title>
        <authorList>
            <person name="Ota T."/>
            <person name="Suzuki Y."/>
            <person name="Nishikawa T."/>
            <person name="Otsuki T."/>
            <person name="Sugiyama T."/>
            <person name="Irie R."/>
            <person name="Wakamatsu A."/>
            <person name="Hayashi K."/>
            <person name="Sato H."/>
            <person name="Nagai K."/>
            <person name="Kimura K."/>
            <person name="Makita H."/>
            <person name="Sekine M."/>
            <person name="Obayashi M."/>
            <person name="Nishi T."/>
            <person name="Shibahara T."/>
            <person name="Tanaka T."/>
            <person name="Ishii S."/>
            <person name="Yamamoto J."/>
            <person name="Saito K."/>
            <person name="Kawai Y."/>
            <person name="Isono Y."/>
            <person name="Nakamura Y."/>
            <person name="Nagahari K."/>
            <person name="Murakami K."/>
            <person name="Yasuda T."/>
            <person name="Iwayanagi T."/>
            <person name="Wagatsuma M."/>
            <person name="Shiratori A."/>
            <person name="Sudo H."/>
            <person name="Hosoiri T."/>
            <person name="Kaku Y."/>
            <person name="Kodaira H."/>
            <person name="Kondo H."/>
            <person name="Sugawara M."/>
            <person name="Takahashi M."/>
            <person name="Kanda K."/>
            <person name="Yokoi T."/>
            <person name="Furuya T."/>
            <person name="Kikkawa E."/>
            <person name="Omura Y."/>
            <person name="Abe K."/>
            <person name="Kamihara K."/>
            <person name="Katsuta N."/>
            <person name="Sato K."/>
            <person name="Tanikawa M."/>
            <person name="Yamazaki M."/>
            <person name="Ninomiya K."/>
            <person name="Ishibashi T."/>
            <person name="Yamashita H."/>
            <person name="Murakawa K."/>
            <person name="Fujimori K."/>
            <person name="Tanai H."/>
            <person name="Kimata M."/>
            <person name="Watanabe M."/>
            <person name="Hiraoka S."/>
            <person name="Chiba Y."/>
            <person name="Ishida S."/>
            <person name="Ono Y."/>
            <person name="Takiguchi S."/>
            <person name="Watanabe S."/>
            <person name="Yosida M."/>
            <person name="Hotuta T."/>
            <person name="Kusano J."/>
            <person name="Kanehori K."/>
            <person name="Takahashi-Fujii A."/>
            <person name="Hara H."/>
            <person name="Tanase T.-O."/>
            <person name="Nomura Y."/>
            <person name="Togiya S."/>
            <person name="Komai F."/>
            <person name="Hara R."/>
            <person name="Takeuchi K."/>
            <person name="Arita M."/>
            <person name="Imose N."/>
            <person name="Musashino K."/>
            <person name="Yuuki H."/>
            <person name="Oshima A."/>
            <person name="Sasaki N."/>
            <person name="Aotsuka S."/>
            <person name="Yoshikawa Y."/>
            <person name="Matsunawa H."/>
            <person name="Ichihara T."/>
            <person name="Shiohata N."/>
            <person name="Sano S."/>
            <person name="Moriya S."/>
            <person name="Momiyama H."/>
            <person name="Satoh N."/>
            <person name="Takami S."/>
            <person name="Terashima Y."/>
            <person name="Suzuki O."/>
            <person name="Nakagawa S."/>
            <person name="Senoh A."/>
            <person name="Mizoguchi H."/>
            <person name="Goto Y."/>
            <person name="Shimizu F."/>
            <person name="Wakebe H."/>
            <person name="Hishigaki H."/>
            <person name="Watanabe T."/>
            <person name="Sugiyama A."/>
            <person name="Takemoto M."/>
            <person name="Kawakami B."/>
            <person name="Yamazaki M."/>
            <person name="Watanabe K."/>
            <person name="Kumagai A."/>
            <person name="Itakura S."/>
            <person name="Fukuzumi Y."/>
            <person name="Fujimori Y."/>
            <person name="Komiyama M."/>
            <person name="Tashiro H."/>
            <person name="Tanigami A."/>
            <person name="Fujiwara T."/>
            <person name="Ono T."/>
            <person name="Yamada K."/>
            <person name="Fujii Y."/>
            <person name="Ozaki K."/>
            <person name="Hirao M."/>
            <person name="Ohmori Y."/>
            <person name="Kawabata A."/>
            <person name="Hikiji T."/>
            <person name="Kobatake N."/>
            <person name="Inagaki H."/>
            <person name="Ikema Y."/>
            <person name="Okamoto S."/>
            <person name="Okitani R."/>
            <person name="Kawakami T."/>
            <person name="Noguchi S."/>
            <person name="Itoh T."/>
            <person name="Shigeta K."/>
            <person name="Senba T."/>
            <person name="Matsumura K."/>
            <person name="Nakajima Y."/>
            <person name="Mizuno T."/>
            <person name="Morinaga M."/>
            <person name="Sasaki M."/>
            <person name="Togashi T."/>
            <person name="Oyama M."/>
            <person name="Hata H."/>
            <person name="Watanabe M."/>
            <person name="Komatsu T."/>
            <person name="Mizushima-Sugano J."/>
            <person name="Satoh T."/>
            <person name="Shirai Y."/>
            <person name="Takahashi Y."/>
            <person name="Nakagawa K."/>
            <person name="Okumura K."/>
            <person name="Nagase T."/>
            <person name="Nomura N."/>
            <person name="Kikuchi H."/>
            <person name="Masuho Y."/>
            <person name="Yamashita R."/>
            <person name="Nakai K."/>
            <person name="Yada T."/>
            <person name="Nakamura Y."/>
            <person name="Ohara O."/>
            <person name="Isogai T."/>
            <person name="Sugano S."/>
        </authorList>
    </citation>
    <scope>NUCLEOTIDE SEQUENCE [LARGE SCALE MRNA]</scope>
    <source>
        <tissue>Trachea</tissue>
    </source>
</reference>
<reference key="2">
    <citation type="journal article" date="2004" name="Genome Res.">
        <title>The status, quality, and expansion of the NIH full-length cDNA project: the Mammalian Gene Collection (MGC).</title>
        <authorList>
            <consortium name="The MGC Project Team"/>
        </authorList>
    </citation>
    <scope>NUCLEOTIDE SEQUENCE [LARGE SCALE MRNA]</scope>
</reference>
<reference key="3">
    <citation type="journal article" date="2006" name="Dev. Cell">
        <title>p37 is a p97 adaptor required for Golgi and ER biogenesis in interphase and at the end of mitosis.</title>
        <authorList>
            <person name="Uchiyama K."/>
            <person name="Totsukawa G."/>
            <person name="Puhka M."/>
            <person name="Kaneko Y."/>
            <person name="Jokitalo E."/>
            <person name="Dreveny I."/>
            <person name="Beuron F."/>
            <person name="Zhang X."/>
            <person name="Freemont P."/>
            <person name="Kondo H."/>
        </authorList>
    </citation>
    <scope>FUNCTION</scope>
</reference>
<reference key="4">
    <citation type="journal article" date="2008" name="Proc. Natl. Acad. Sci. U.S.A.">
        <title>A quantitative atlas of mitotic phosphorylation.</title>
        <authorList>
            <person name="Dephoure N."/>
            <person name="Zhou C."/>
            <person name="Villen J."/>
            <person name="Beausoleil S.A."/>
            <person name="Bakalarski C.E."/>
            <person name="Elledge S.J."/>
            <person name="Gygi S.P."/>
        </authorList>
    </citation>
    <scope>PHOSPHORYLATION [LARGE SCALE ANALYSIS] AT SER-56 AND THR-59</scope>
    <scope>IDENTIFICATION BY MASS SPECTROMETRY [LARGE SCALE ANALYSIS]</scope>
    <source>
        <tissue>Cervix carcinoma</tissue>
    </source>
</reference>
<reference key="5">
    <citation type="journal article" date="2009" name="Anal. Chem.">
        <title>Lys-N and trypsin cover complementary parts of the phosphoproteome in a refined SCX-based approach.</title>
        <authorList>
            <person name="Gauci S."/>
            <person name="Helbig A.O."/>
            <person name="Slijper M."/>
            <person name="Krijgsveld J."/>
            <person name="Heck A.J."/>
            <person name="Mohammed S."/>
        </authorList>
    </citation>
    <scope>IDENTIFICATION BY MASS SPECTROMETRY [LARGE SCALE ANALYSIS]</scope>
</reference>
<reference key="6">
    <citation type="journal article" date="2009" name="Mol. Cell. Proteomics">
        <title>Large-scale proteomics analysis of the human kinome.</title>
        <authorList>
            <person name="Oppermann F.S."/>
            <person name="Gnad F."/>
            <person name="Olsen J.V."/>
            <person name="Hornberger R."/>
            <person name="Greff Z."/>
            <person name="Keri G."/>
            <person name="Mann M."/>
            <person name="Daub H."/>
        </authorList>
    </citation>
    <scope>IDENTIFICATION BY MASS SPECTROMETRY [LARGE SCALE ANALYSIS]</scope>
</reference>
<reference key="7">
    <citation type="journal article" date="2009" name="Sci. Signal.">
        <title>Quantitative phosphoproteomic analysis of T cell receptor signaling reveals system-wide modulation of protein-protein interactions.</title>
        <authorList>
            <person name="Mayya V."/>
            <person name="Lundgren D.H."/>
            <person name="Hwang S.-I."/>
            <person name="Rezaul K."/>
            <person name="Wu L."/>
            <person name="Eng J.K."/>
            <person name="Rodionov V."/>
            <person name="Han D.K."/>
        </authorList>
    </citation>
    <scope>PHOSPHORYLATION [LARGE SCALE ANALYSIS] AT SER-231 AND SER-235</scope>
    <scope>IDENTIFICATION BY MASS SPECTROMETRY [LARGE SCALE ANALYSIS]</scope>
    <source>
        <tissue>Leukemic T-cell</tissue>
    </source>
</reference>
<reference key="8">
    <citation type="journal article" date="2012" name="Proc. Natl. Acad. Sci. U.S.A.">
        <title>N-terminal acetylome analyses and functional insights of the N-terminal acetyltransferase NatB.</title>
        <authorList>
            <person name="Van Damme P."/>
            <person name="Lasa M."/>
            <person name="Polevoda B."/>
            <person name="Gazquez C."/>
            <person name="Elosegui-Artola A."/>
            <person name="Kim D.S."/>
            <person name="De Juan-Pardo E."/>
            <person name="Demeyer K."/>
            <person name="Hole K."/>
            <person name="Larrea E."/>
            <person name="Timmerman E."/>
            <person name="Prieto J."/>
            <person name="Arnesen T."/>
            <person name="Sherman F."/>
            <person name="Gevaert K."/>
            <person name="Aldabe R."/>
        </authorList>
    </citation>
    <scope>ACETYLATION [LARGE SCALE ANALYSIS] AT ALA-2</scope>
    <scope>CLEAVAGE OF INITIATOR METHIONINE [LARGE SCALE ANALYSIS]</scope>
    <scope>IDENTIFICATION BY MASS SPECTROMETRY [LARGE SCALE ANALYSIS]</scope>
</reference>
<reference key="9">
    <citation type="journal article" date="2013" name="J. Cell Biol.">
        <title>The UBXN-2/p37/p47 adaptors of CDC-48/p97 regulate mitosis by limiting the centrosomal recruitment of Aurora A.</title>
        <authorList>
            <person name="Kress E."/>
            <person name="Schwager F."/>
            <person name="Holtackers R."/>
            <person name="Seiler J."/>
            <person name="Prodon F."/>
            <person name="Zanin E."/>
            <person name="Eiteneuer A."/>
            <person name="Toya M."/>
            <person name="Sugimoto A."/>
            <person name="Meyer H."/>
            <person name="Meraldi P."/>
            <person name="Gotta M."/>
        </authorList>
    </citation>
    <scope>FUNCTION</scope>
</reference>
<reference key="10">
    <citation type="journal article" date="2013" name="J. Proteome Res.">
        <title>Toward a comprehensive characterization of a human cancer cell phosphoproteome.</title>
        <authorList>
            <person name="Zhou H."/>
            <person name="Di Palma S."/>
            <person name="Preisinger C."/>
            <person name="Peng M."/>
            <person name="Polat A.N."/>
            <person name="Heck A.J."/>
            <person name="Mohammed S."/>
        </authorList>
    </citation>
    <scope>PHOSPHORYLATION [LARGE SCALE ANALYSIS] AT SER-66 AND SER-235</scope>
    <scope>IDENTIFICATION BY MASS SPECTROMETRY [LARGE SCALE ANALYSIS]</scope>
    <source>
        <tissue>Cervix carcinoma</tissue>
        <tissue>Erythroleukemia</tissue>
    </source>
</reference>
<reference key="11">
    <citation type="journal article" date="2014" name="J. Proteomics">
        <title>An enzyme assisted RP-RPLC approach for in-depth analysis of human liver phosphoproteome.</title>
        <authorList>
            <person name="Bian Y."/>
            <person name="Song C."/>
            <person name="Cheng K."/>
            <person name="Dong M."/>
            <person name="Wang F."/>
            <person name="Huang J."/>
            <person name="Sun D."/>
            <person name="Wang L."/>
            <person name="Ye M."/>
            <person name="Zou H."/>
        </authorList>
    </citation>
    <scope>IDENTIFICATION BY MASS SPECTROMETRY [LARGE SCALE ANALYSIS]</scope>
    <source>
        <tissue>Liver</tissue>
    </source>
</reference>
<sequence length="331" mass="37077">MAEGGGPEPGEQERRSSGPRPPSARDLQLALAELYEDEVKCKSSKSNRPKATVFKSPRTPPQRFYSSEHEYSGLNIVRPSTGKIVNELFKEAREHGAVPLNEATRASGDDKSKSFTGGGYRLGSSFCKRSEYIYGENQLQDVQILLKLWSNGFSLDDGELRPYNEPTNAQFLESVKRGEIPLELQRLVHGGQVNLDMEDHQDQEYIKPRLRFKAFSGEGQKLGSLTPEIVSTPSSPEEEDKSILNAVVLIDDSVPTTKIQIRLADGSRLIQRFNSTHRILDVRNFIVQSRPEFAALDFILVTSFPNKELTDESLTLLEADILNTVLLQQLK</sequence>
<keyword id="KW-0002">3D-structure</keyword>
<keyword id="KW-0007">Acetylation</keyword>
<keyword id="KW-0963">Cytoplasm</keyword>
<keyword id="KW-0206">Cytoskeleton</keyword>
<keyword id="KW-0256">Endoplasmic reticulum</keyword>
<keyword id="KW-0333">Golgi apparatus</keyword>
<keyword id="KW-0539">Nucleus</keyword>
<keyword id="KW-0597">Phosphoprotein</keyword>
<keyword id="KW-1267">Proteomics identification</keyword>
<keyword id="KW-1185">Reference proteome</keyword>
<evidence type="ECO:0000250" key="1">
    <source>
        <dbReference type="UniProtKB" id="P0C627"/>
    </source>
</evidence>
<evidence type="ECO:0000250" key="2">
    <source>
        <dbReference type="UniProtKB" id="Q0KL01"/>
    </source>
</evidence>
<evidence type="ECO:0000255" key="3">
    <source>
        <dbReference type="PROSITE-ProRule" id="PRU00215"/>
    </source>
</evidence>
<evidence type="ECO:0000255" key="4">
    <source>
        <dbReference type="PROSITE-ProRule" id="PRU00732"/>
    </source>
</evidence>
<evidence type="ECO:0000256" key="5">
    <source>
        <dbReference type="SAM" id="MobiDB-lite"/>
    </source>
</evidence>
<evidence type="ECO:0000269" key="6">
    <source>
    </source>
</evidence>
<evidence type="ECO:0000269" key="7">
    <source>
    </source>
</evidence>
<evidence type="ECO:0000305" key="8"/>
<evidence type="ECO:0007744" key="9">
    <source>
    </source>
</evidence>
<evidence type="ECO:0007744" key="10">
    <source>
    </source>
</evidence>
<evidence type="ECO:0007744" key="11">
    <source>
    </source>
</evidence>
<evidence type="ECO:0007744" key="12">
    <source>
    </source>
</evidence>
<name>UBX2B_HUMAN</name>
<organism>
    <name type="scientific">Homo sapiens</name>
    <name type="common">Human</name>
    <dbReference type="NCBI Taxonomy" id="9606"/>
    <lineage>
        <taxon>Eukaryota</taxon>
        <taxon>Metazoa</taxon>
        <taxon>Chordata</taxon>
        <taxon>Craniata</taxon>
        <taxon>Vertebrata</taxon>
        <taxon>Euteleostomi</taxon>
        <taxon>Mammalia</taxon>
        <taxon>Eutheria</taxon>
        <taxon>Euarchontoglires</taxon>
        <taxon>Primates</taxon>
        <taxon>Haplorrhini</taxon>
        <taxon>Catarrhini</taxon>
        <taxon>Hominidae</taxon>
        <taxon>Homo</taxon>
    </lineage>
</organism>
<feature type="initiator methionine" description="Removed" evidence="11">
    <location>
        <position position="1"/>
    </location>
</feature>
<feature type="chain" id="PRO_0000315228" description="UBX domain-containing protein 2B">
    <location>
        <begin position="2"/>
        <end position="331"/>
    </location>
</feature>
<feature type="domain" description="SEP" evidence="4">
    <location>
        <begin position="141"/>
        <end position="206"/>
    </location>
</feature>
<feature type="domain" description="UBX" evidence="3">
    <location>
        <begin position="252"/>
        <end position="329"/>
    </location>
</feature>
<feature type="region of interest" description="Disordered" evidence="5">
    <location>
        <begin position="1"/>
        <end position="26"/>
    </location>
</feature>
<feature type="region of interest" description="Disordered" evidence="5">
    <location>
        <begin position="40"/>
        <end position="65"/>
    </location>
</feature>
<feature type="modified residue" description="N-acetylalanine" evidence="11">
    <location>
        <position position="2"/>
    </location>
</feature>
<feature type="modified residue" description="Phosphoserine" evidence="9">
    <location>
        <position position="56"/>
    </location>
</feature>
<feature type="modified residue" description="Phosphothreonine" evidence="9">
    <location>
        <position position="59"/>
    </location>
</feature>
<feature type="modified residue" description="Phosphoserine" evidence="12">
    <location>
        <position position="66"/>
    </location>
</feature>
<feature type="modified residue" description="Phosphoserine" evidence="10">
    <location>
        <position position="231"/>
    </location>
</feature>
<feature type="modified residue" description="Phosphoserine" evidence="1">
    <location>
        <position position="234"/>
    </location>
</feature>
<feature type="modified residue" description="Phosphoserine" evidence="10 12">
    <location>
        <position position="235"/>
    </location>
</feature>
<accession>Q14CS0</accession>
<accession>B3KWZ3</accession>
<gene>
    <name type="primary">UBXN2B</name>
</gene>
<comment type="function">
    <text evidence="6 7">Adapter protein required for Golgi and endoplasmic reticulum biogenesis (PubMed:17141156). Involved in Golgi and endoplasmic reticulum maintenance during interphase and in their reassembly at the end of mitosis (PubMed:17141156). The complex formed with VCP has membrane fusion activity; membrane fusion activity requires USO1-GOLGA2 tethering and BET1L (PubMed:17141156). VCPIP1 is also required, but not its deubiquitinating activity (PubMed:17141156). Together with NSFL1C/p47, regulates the centrosomal levels of kinase AURKA/Aurora A during mitotic progression by promoting AURKA removal from centrosomes in prophase (PubMed:23649807). Also, regulates spindle orientation during mitosis (PubMed:23649807).</text>
</comment>
<comment type="subunit">
    <text evidence="2">Interacts with VCP. Does not bind ubiquitin.</text>
</comment>
<comment type="interaction">
    <interactant intactId="EBI-1993619">
        <id>Q14CS0</id>
    </interactant>
    <interactant intactId="EBI-748171">
        <id>O43186</id>
        <label>CRX</label>
    </interactant>
    <organismsDiffer>false</organismsDiffer>
    <experiments>3</experiments>
</comment>
<comment type="interaction">
    <interactant intactId="EBI-1993619">
        <id>Q14CS0</id>
    </interactant>
    <interactant intactId="EBI-6509505">
        <id>Q0VD86</id>
        <label>INCA1</label>
    </interactant>
    <organismsDiffer>false</organismsDiffer>
    <experiments>6</experiments>
</comment>
<comment type="interaction">
    <interactant intactId="EBI-1993619">
        <id>Q14CS0</id>
    </interactant>
    <interactant intactId="EBI-2864512">
        <id>P50221</id>
        <label>MEOX1</label>
    </interactant>
    <organismsDiffer>false</organismsDiffer>
    <experiments>3</experiments>
</comment>
<comment type="interaction">
    <interactant intactId="EBI-1993619">
        <id>Q14CS0</id>
    </interactant>
    <interactant intactId="EBI-16439278">
        <id>Q6FHY5</id>
        <label>MEOX2</label>
    </interactant>
    <organismsDiffer>false</organismsDiffer>
    <experiments>3</experiments>
</comment>
<comment type="interaction">
    <interactant intactId="EBI-1993619">
        <id>Q14CS0</id>
    </interactant>
    <interactant intactId="EBI-6165879">
        <id>Q96IV0</id>
        <label>NGLY1</label>
    </interactant>
    <organismsDiffer>false</organismsDiffer>
    <experiments>7</experiments>
</comment>
<comment type="interaction">
    <interactant intactId="EBI-1993619">
        <id>Q14CS0</id>
    </interactant>
    <interactant intactId="EBI-296331">
        <id>Q02548</id>
        <label>PAX5</label>
    </interactant>
    <organismsDiffer>false</organismsDiffer>
    <experiments>3</experiments>
</comment>
<comment type="interaction">
    <interactant intactId="EBI-1993619">
        <id>Q14CS0</id>
    </interactant>
    <interactant intactId="EBI-747278">
        <id>P26367</id>
        <label>PAX6</label>
    </interactant>
    <organismsDiffer>false</organismsDiffer>
    <experiments>3</experiments>
</comment>
<comment type="interaction">
    <interactant intactId="EBI-1993619">
        <id>Q14CS0</id>
    </interactant>
    <interactant intactId="EBI-714158">
        <id>Q13526</id>
        <label>PIN1</label>
    </interactant>
    <organismsDiffer>false</organismsDiffer>
    <experiments>3</experiments>
</comment>
<comment type="interaction">
    <interactant intactId="EBI-1993619">
        <id>Q14CS0</id>
    </interactant>
    <interactant intactId="EBI-1993899">
        <id>Q9BZV1</id>
        <label>UBXN6</label>
    </interactant>
    <organismsDiffer>false</organismsDiffer>
    <experiments>3</experiments>
</comment>
<comment type="interaction">
    <interactant intactId="EBI-1993619">
        <id>Q14CS0</id>
    </interactant>
    <interactant intactId="EBI-10234766">
        <id>Q9HCJ6</id>
        <label>VAT1L</label>
    </interactant>
    <organismsDiffer>false</organismsDiffer>
    <experiments>3</experiments>
</comment>
<comment type="interaction">
    <interactant intactId="EBI-1993619">
        <id>Q14CS0</id>
    </interactant>
    <interactant intactId="EBI-10281506">
        <id>Q969W3</id>
        <label>VCF1</label>
    </interactant>
    <organismsDiffer>false</organismsDiffer>
    <experiments>4</experiments>
</comment>
<comment type="interaction">
    <interactant intactId="EBI-1993619">
        <id>Q14CS0</id>
    </interactant>
    <interactant intactId="EBI-355164">
        <id>P55072</id>
        <label>VCP</label>
    </interactant>
    <organismsDiffer>false</organismsDiffer>
    <experiments>16</experiments>
</comment>
<comment type="interaction">
    <interactant intactId="EBI-1993619">
        <id>Q14CS0</id>
    </interactant>
    <interactant intactId="EBI-2815120">
        <id>Q6GPH4</id>
        <label>XAF1</label>
    </interactant>
    <organismsDiffer>false</organismsDiffer>
    <experiments>3</experiments>
</comment>
<comment type="subcellular location">
    <subcellularLocation>
        <location evidence="1">Nucleus</location>
    </subcellularLocation>
    <subcellularLocation>
        <location evidence="1">Cytoplasm</location>
        <location evidence="1">Cytosol</location>
    </subcellularLocation>
    <subcellularLocation>
        <location evidence="1">Endoplasmic reticulum</location>
    </subcellularLocation>
    <subcellularLocation>
        <location evidence="1">Golgi apparatus</location>
    </subcellularLocation>
    <subcellularLocation>
        <location evidence="2">Cytoplasm</location>
        <location evidence="2">Cytoskeleton</location>
        <location evidence="2">Microtubule organizing center</location>
        <location evidence="2">Centrosome</location>
    </subcellularLocation>
    <text evidence="2">Localizes to centrosome during mitotic prophase and metaphase.</text>
</comment>
<comment type="similarity">
    <text evidence="8">Belongs to the NSFL1C family.</text>
</comment>
<dbReference type="EMBL" id="AK126300">
    <property type="protein sequence ID" value="BAG54305.1"/>
    <property type="molecule type" value="mRNA"/>
</dbReference>
<dbReference type="EMBL" id="BC113645">
    <property type="protein sequence ID" value="AAI13646.1"/>
    <property type="molecule type" value="mRNA"/>
</dbReference>
<dbReference type="CCDS" id="CCDS43741.1"/>
<dbReference type="RefSeq" id="NP_001071087.1">
    <property type="nucleotide sequence ID" value="NM_001077619.2"/>
</dbReference>
<dbReference type="RefSeq" id="NP_001317464.1">
    <property type="nucleotide sequence ID" value="NM_001330535.1"/>
</dbReference>
<dbReference type="PDB" id="8B5R">
    <property type="method" value="EM"/>
    <property type="resolution" value="6.10 A"/>
    <property type="chains" value="X=215-225, Y=246-331"/>
</dbReference>
<dbReference type="PDBsum" id="8B5R"/>
<dbReference type="EMDB" id="EMD-15861"/>
<dbReference type="SMR" id="Q14CS0"/>
<dbReference type="BioGRID" id="126491">
    <property type="interactions" value="45"/>
</dbReference>
<dbReference type="ComplexPortal" id="CPX-8121">
    <property type="entry name" value="VCP-UBXN2B AAA ATPase complex"/>
</dbReference>
<dbReference type="FunCoup" id="Q14CS0">
    <property type="interactions" value="3380"/>
</dbReference>
<dbReference type="IntAct" id="Q14CS0">
    <property type="interactions" value="28"/>
</dbReference>
<dbReference type="STRING" id="9606.ENSP00000382507"/>
<dbReference type="iPTMnet" id="Q14CS0"/>
<dbReference type="PhosphoSitePlus" id="Q14CS0"/>
<dbReference type="BioMuta" id="UBXN2B"/>
<dbReference type="DMDM" id="121946691"/>
<dbReference type="jPOST" id="Q14CS0"/>
<dbReference type="MassIVE" id="Q14CS0"/>
<dbReference type="PaxDb" id="9606-ENSP00000382507"/>
<dbReference type="PeptideAtlas" id="Q14CS0"/>
<dbReference type="ProteomicsDB" id="60331"/>
<dbReference type="Pumba" id="Q14CS0"/>
<dbReference type="ABCD" id="Q14CS0">
    <property type="antibodies" value="1 sequenced antibody"/>
</dbReference>
<dbReference type="Antibodypedia" id="51502">
    <property type="antibodies" value="177 antibodies from 13 providers"/>
</dbReference>
<dbReference type="DNASU" id="137886"/>
<dbReference type="Ensembl" id="ENST00000399598.7">
    <property type="protein sequence ID" value="ENSP00000382507.2"/>
    <property type="gene ID" value="ENSG00000215114.10"/>
</dbReference>
<dbReference type="GeneID" id="137886"/>
<dbReference type="KEGG" id="hsa:137886"/>
<dbReference type="MANE-Select" id="ENST00000399598.7">
    <property type="protein sequence ID" value="ENSP00000382507.2"/>
    <property type="RefSeq nucleotide sequence ID" value="NM_001077619.2"/>
    <property type="RefSeq protein sequence ID" value="NP_001071087.1"/>
</dbReference>
<dbReference type="UCSC" id="uc003xtl.3">
    <property type="organism name" value="human"/>
</dbReference>
<dbReference type="AGR" id="HGNC:27035"/>
<dbReference type="CTD" id="137886"/>
<dbReference type="DisGeNET" id="137886"/>
<dbReference type="GeneCards" id="UBXN2B"/>
<dbReference type="HGNC" id="HGNC:27035">
    <property type="gene designation" value="UBXN2B"/>
</dbReference>
<dbReference type="HPA" id="ENSG00000215114">
    <property type="expression patterns" value="Low tissue specificity"/>
</dbReference>
<dbReference type="MIM" id="610686">
    <property type="type" value="gene"/>
</dbReference>
<dbReference type="neXtProt" id="NX_Q14CS0"/>
<dbReference type="OpenTargets" id="ENSG00000215114"/>
<dbReference type="PharmGKB" id="PA162408394"/>
<dbReference type="VEuPathDB" id="HostDB:ENSG00000215114"/>
<dbReference type="eggNOG" id="KOG2086">
    <property type="taxonomic scope" value="Eukaryota"/>
</dbReference>
<dbReference type="GeneTree" id="ENSGT00520000055567"/>
<dbReference type="HOGENOM" id="CLU_029402_0_0_1"/>
<dbReference type="InParanoid" id="Q14CS0"/>
<dbReference type="OMA" id="REVLHCN"/>
<dbReference type="OrthoDB" id="25887at2759"/>
<dbReference type="PAN-GO" id="Q14CS0">
    <property type="GO annotations" value="8 GO annotations based on evolutionary models"/>
</dbReference>
<dbReference type="PhylomeDB" id="Q14CS0"/>
<dbReference type="TreeFam" id="TF312973"/>
<dbReference type="PathwayCommons" id="Q14CS0"/>
<dbReference type="SignaLink" id="Q14CS0"/>
<dbReference type="SIGNOR" id="Q14CS0"/>
<dbReference type="BioGRID-ORCS" id="137886">
    <property type="hits" value="18 hits in 1155 CRISPR screens"/>
</dbReference>
<dbReference type="ChiTaRS" id="UBXN2B">
    <property type="organism name" value="human"/>
</dbReference>
<dbReference type="GenomeRNAi" id="137886"/>
<dbReference type="Pharos" id="Q14CS0">
    <property type="development level" value="Tbio"/>
</dbReference>
<dbReference type="PRO" id="PR:Q14CS0"/>
<dbReference type="Proteomes" id="UP000005640">
    <property type="component" value="Chromosome 8"/>
</dbReference>
<dbReference type="RNAct" id="Q14CS0">
    <property type="molecule type" value="protein"/>
</dbReference>
<dbReference type="Bgee" id="ENSG00000215114">
    <property type="expression patterns" value="Expressed in cortical plate and 218 other cell types or tissues"/>
</dbReference>
<dbReference type="ExpressionAtlas" id="Q14CS0">
    <property type="expression patterns" value="baseline and differential"/>
</dbReference>
<dbReference type="GO" id="GO:0005829">
    <property type="term" value="C:cytosol"/>
    <property type="evidence" value="ECO:0000318"/>
    <property type="project" value="GO_Central"/>
</dbReference>
<dbReference type="GO" id="GO:0005783">
    <property type="term" value="C:endoplasmic reticulum"/>
    <property type="evidence" value="ECO:0007669"/>
    <property type="project" value="UniProtKB-SubCell"/>
</dbReference>
<dbReference type="GO" id="GO:0005794">
    <property type="term" value="C:Golgi apparatus"/>
    <property type="evidence" value="ECO:0007669"/>
    <property type="project" value="UniProtKB-SubCell"/>
</dbReference>
<dbReference type="GO" id="GO:0005634">
    <property type="term" value="C:nucleus"/>
    <property type="evidence" value="ECO:0000318"/>
    <property type="project" value="GO_Central"/>
</dbReference>
<dbReference type="GO" id="GO:0031616">
    <property type="term" value="C:spindle pole centrosome"/>
    <property type="evidence" value="ECO:0007669"/>
    <property type="project" value="Ensembl"/>
</dbReference>
<dbReference type="GO" id="GO:0043130">
    <property type="term" value="F:ubiquitin binding"/>
    <property type="evidence" value="ECO:0000318"/>
    <property type="project" value="GO_Central"/>
</dbReference>
<dbReference type="GO" id="GO:0000045">
    <property type="term" value="P:autophagosome assembly"/>
    <property type="evidence" value="ECO:0000318"/>
    <property type="project" value="GO_Central"/>
</dbReference>
<dbReference type="GO" id="GO:0000132">
    <property type="term" value="P:establishment of mitotic spindle orientation"/>
    <property type="evidence" value="ECO:0000316"/>
    <property type="project" value="UniProtKB"/>
</dbReference>
<dbReference type="GO" id="GO:0007030">
    <property type="term" value="P:Golgi organization"/>
    <property type="evidence" value="ECO:0000318"/>
    <property type="project" value="GO_Central"/>
</dbReference>
<dbReference type="GO" id="GO:0061025">
    <property type="term" value="P:membrane fusion"/>
    <property type="evidence" value="ECO:0000318"/>
    <property type="project" value="GO_Central"/>
</dbReference>
<dbReference type="GO" id="GO:1904780">
    <property type="term" value="P:negative regulation of protein localization to centrosome"/>
    <property type="evidence" value="ECO:0000316"/>
    <property type="project" value="UniProtKB"/>
</dbReference>
<dbReference type="GO" id="GO:0031468">
    <property type="term" value="P:nuclear membrane reassembly"/>
    <property type="evidence" value="ECO:0000318"/>
    <property type="project" value="GO_Central"/>
</dbReference>
<dbReference type="GO" id="GO:0046604">
    <property type="term" value="P:positive regulation of mitotic centrosome separation"/>
    <property type="evidence" value="ECO:0000316"/>
    <property type="project" value="UniProtKB"/>
</dbReference>
<dbReference type="GO" id="GO:0043161">
    <property type="term" value="P:proteasome-mediated ubiquitin-dependent protein catabolic process"/>
    <property type="evidence" value="ECO:0000318"/>
    <property type="project" value="GO_Central"/>
</dbReference>
<dbReference type="CDD" id="cd17161">
    <property type="entry name" value="UBX_UBXN2B"/>
    <property type="match status" value="1"/>
</dbReference>
<dbReference type="FunFam" id="3.30.420.210:FF:000001">
    <property type="entry name" value="NSFL1 (P97) cofactor (P47)"/>
    <property type="match status" value="1"/>
</dbReference>
<dbReference type="FunFam" id="3.10.20.90:FF:000135">
    <property type="entry name" value="UBX domain-containing protein 2B"/>
    <property type="match status" value="1"/>
</dbReference>
<dbReference type="Gene3D" id="3.10.20.90">
    <property type="entry name" value="Phosphatidylinositol 3-kinase Catalytic Subunit, Chain A, domain 1"/>
    <property type="match status" value="1"/>
</dbReference>
<dbReference type="Gene3D" id="3.30.420.210">
    <property type="entry name" value="SEP domain"/>
    <property type="match status" value="1"/>
</dbReference>
<dbReference type="InterPro" id="IPR036241">
    <property type="entry name" value="NSFL1C_SEP_dom_sf"/>
</dbReference>
<dbReference type="InterPro" id="IPR012989">
    <property type="entry name" value="SEP_domain"/>
</dbReference>
<dbReference type="InterPro" id="IPR029071">
    <property type="entry name" value="Ubiquitin-like_domsf"/>
</dbReference>
<dbReference type="InterPro" id="IPR001012">
    <property type="entry name" value="UBX_dom"/>
</dbReference>
<dbReference type="PANTHER" id="PTHR23333">
    <property type="entry name" value="UBX DOMAIN CONTAINING PROTEIN"/>
    <property type="match status" value="1"/>
</dbReference>
<dbReference type="PANTHER" id="PTHR23333:SF14">
    <property type="entry name" value="UBX DOMAIN-CONTAINING PROTEIN 2B"/>
    <property type="match status" value="1"/>
</dbReference>
<dbReference type="Pfam" id="PF08059">
    <property type="entry name" value="SEP"/>
    <property type="match status" value="1"/>
</dbReference>
<dbReference type="Pfam" id="PF00789">
    <property type="entry name" value="UBX"/>
    <property type="match status" value="1"/>
</dbReference>
<dbReference type="SMART" id="SM00553">
    <property type="entry name" value="SEP"/>
    <property type="match status" value="1"/>
</dbReference>
<dbReference type="SMART" id="SM00166">
    <property type="entry name" value="UBX"/>
    <property type="match status" value="1"/>
</dbReference>
<dbReference type="SUPFAM" id="SSF102848">
    <property type="entry name" value="NSFL1 (p97 ATPase) cofactor p47, SEP domain"/>
    <property type="match status" value="1"/>
</dbReference>
<dbReference type="SUPFAM" id="SSF54236">
    <property type="entry name" value="Ubiquitin-like"/>
    <property type="match status" value="1"/>
</dbReference>
<dbReference type="PROSITE" id="PS51399">
    <property type="entry name" value="SEP"/>
    <property type="match status" value="1"/>
</dbReference>
<dbReference type="PROSITE" id="PS50033">
    <property type="entry name" value="UBX"/>
    <property type="match status" value="1"/>
</dbReference>
<protein>
    <recommendedName>
        <fullName>UBX domain-containing protein 2B</fullName>
    </recommendedName>
    <alternativeName>
        <fullName>NSFL1 cofactor p37</fullName>
    </alternativeName>
    <alternativeName>
        <fullName>p97 cofactor p37</fullName>
    </alternativeName>
</protein>
<proteinExistence type="evidence at protein level"/>